<sequence length="539" mass="57290">MAKEIKFSEEARRAMLRGVDKLADAVKVTLGPKGRNVVLEKKFGSPLITNDGVTIAKEIELEDPFENMGAKLVAEVASKTNDVAGDGTTTATVLAQAMIREGLKNVTAGANPMGIRKGIEKAVAVAVEELKAISKPIKGKESIAQVAAISAADEEVGQLIAEAMERVGNDGVITLEESKGFTTELDVVEGMQFDRGYVSPYMITDTEKMEAVLENPYILITDKKISNIQDILPILEQVVQQGKPLLIIAEDVEGEALATLVVNKLRGTFTAVAVKAPGFGDRRKAMLEDIAILTGGEVISEELGRDLKSTTIASLGRASKVVVTKENTTIVDGAGDSERIKARINQIRAQLEETTSEFDREKLQERLAKLAGGVAVIKVGAATETELKERKLRIEDALNSTRAAVEEGIVAGGGTALMNVYNKVAAIEAEGDEATGVKIVLRAIEEPVRQIAQNAGLEGSVIVERLKTEKPGIGFNAATGEWVDMIEAGIVDPTKVTRSALQNAASVAAMFLTTEAVVADKPEENKGGNPGMPDMGGMM</sequence>
<name>CH60_GEOSW</name>
<accession>C5D4F4</accession>
<feature type="chain" id="PRO_1000212202" description="Chaperonin GroEL">
    <location>
        <begin position="1"/>
        <end position="539"/>
    </location>
</feature>
<feature type="binding site" evidence="1">
    <location>
        <begin position="29"/>
        <end position="32"/>
    </location>
    <ligand>
        <name>ATP</name>
        <dbReference type="ChEBI" id="CHEBI:30616"/>
    </ligand>
</feature>
<feature type="binding site" evidence="1">
    <location>
        <begin position="86"/>
        <end position="90"/>
    </location>
    <ligand>
        <name>ATP</name>
        <dbReference type="ChEBI" id="CHEBI:30616"/>
    </ligand>
</feature>
<feature type="binding site" evidence="1">
    <location>
        <position position="413"/>
    </location>
    <ligand>
        <name>ATP</name>
        <dbReference type="ChEBI" id="CHEBI:30616"/>
    </ligand>
</feature>
<feature type="binding site" evidence="1">
    <location>
        <begin position="476"/>
        <end position="478"/>
    </location>
    <ligand>
        <name>ATP</name>
        <dbReference type="ChEBI" id="CHEBI:30616"/>
    </ligand>
</feature>
<feature type="binding site" evidence="1">
    <location>
        <position position="492"/>
    </location>
    <ligand>
        <name>ATP</name>
        <dbReference type="ChEBI" id="CHEBI:30616"/>
    </ligand>
</feature>
<gene>
    <name evidence="1" type="primary">groEL</name>
    <name evidence="1" type="synonym">groL</name>
    <name type="ordered locus">GWCH70_0231</name>
</gene>
<dbReference type="EC" id="5.6.1.7" evidence="1"/>
<dbReference type="EMBL" id="CP001638">
    <property type="protein sequence ID" value="ACS23162.1"/>
    <property type="molecule type" value="Genomic_DNA"/>
</dbReference>
<dbReference type="SMR" id="C5D4F4"/>
<dbReference type="STRING" id="471223.GWCH70_0231"/>
<dbReference type="KEGG" id="gwc:GWCH70_0231"/>
<dbReference type="eggNOG" id="COG0459">
    <property type="taxonomic scope" value="Bacteria"/>
</dbReference>
<dbReference type="HOGENOM" id="CLU_016503_3_0_9"/>
<dbReference type="OrthoDB" id="9766614at2"/>
<dbReference type="GO" id="GO:0005737">
    <property type="term" value="C:cytoplasm"/>
    <property type="evidence" value="ECO:0007669"/>
    <property type="project" value="UniProtKB-SubCell"/>
</dbReference>
<dbReference type="GO" id="GO:0005524">
    <property type="term" value="F:ATP binding"/>
    <property type="evidence" value="ECO:0007669"/>
    <property type="project" value="UniProtKB-UniRule"/>
</dbReference>
<dbReference type="GO" id="GO:0140662">
    <property type="term" value="F:ATP-dependent protein folding chaperone"/>
    <property type="evidence" value="ECO:0007669"/>
    <property type="project" value="InterPro"/>
</dbReference>
<dbReference type="GO" id="GO:0016853">
    <property type="term" value="F:isomerase activity"/>
    <property type="evidence" value="ECO:0007669"/>
    <property type="project" value="UniProtKB-KW"/>
</dbReference>
<dbReference type="GO" id="GO:0051082">
    <property type="term" value="F:unfolded protein binding"/>
    <property type="evidence" value="ECO:0007669"/>
    <property type="project" value="UniProtKB-UniRule"/>
</dbReference>
<dbReference type="GO" id="GO:0042026">
    <property type="term" value="P:protein refolding"/>
    <property type="evidence" value="ECO:0007669"/>
    <property type="project" value="UniProtKB-UniRule"/>
</dbReference>
<dbReference type="CDD" id="cd03344">
    <property type="entry name" value="GroEL"/>
    <property type="match status" value="1"/>
</dbReference>
<dbReference type="FunFam" id="1.10.560.10:FF:000001">
    <property type="entry name" value="60 kDa chaperonin"/>
    <property type="match status" value="1"/>
</dbReference>
<dbReference type="FunFam" id="3.50.7.10:FF:000001">
    <property type="entry name" value="60 kDa chaperonin"/>
    <property type="match status" value="1"/>
</dbReference>
<dbReference type="Gene3D" id="3.50.7.10">
    <property type="entry name" value="GroEL"/>
    <property type="match status" value="1"/>
</dbReference>
<dbReference type="Gene3D" id="1.10.560.10">
    <property type="entry name" value="GroEL-like equatorial domain"/>
    <property type="match status" value="1"/>
</dbReference>
<dbReference type="Gene3D" id="3.30.260.10">
    <property type="entry name" value="TCP-1-like chaperonin intermediate domain"/>
    <property type="match status" value="1"/>
</dbReference>
<dbReference type="HAMAP" id="MF_00600">
    <property type="entry name" value="CH60"/>
    <property type="match status" value="1"/>
</dbReference>
<dbReference type="InterPro" id="IPR018370">
    <property type="entry name" value="Chaperonin_Cpn60_CS"/>
</dbReference>
<dbReference type="InterPro" id="IPR001844">
    <property type="entry name" value="Cpn60/GroEL"/>
</dbReference>
<dbReference type="InterPro" id="IPR002423">
    <property type="entry name" value="Cpn60/GroEL/TCP-1"/>
</dbReference>
<dbReference type="InterPro" id="IPR027409">
    <property type="entry name" value="GroEL-like_apical_dom_sf"/>
</dbReference>
<dbReference type="InterPro" id="IPR027413">
    <property type="entry name" value="GROEL-like_equatorial_sf"/>
</dbReference>
<dbReference type="InterPro" id="IPR027410">
    <property type="entry name" value="TCP-1-like_intermed_sf"/>
</dbReference>
<dbReference type="NCBIfam" id="TIGR02348">
    <property type="entry name" value="GroEL"/>
    <property type="match status" value="1"/>
</dbReference>
<dbReference type="NCBIfam" id="NF000592">
    <property type="entry name" value="PRK00013.1"/>
    <property type="match status" value="1"/>
</dbReference>
<dbReference type="NCBIfam" id="NF009487">
    <property type="entry name" value="PRK12849.1"/>
    <property type="match status" value="1"/>
</dbReference>
<dbReference type="NCBIfam" id="NF009488">
    <property type="entry name" value="PRK12850.1"/>
    <property type="match status" value="1"/>
</dbReference>
<dbReference type="NCBIfam" id="NF009489">
    <property type="entry name" value="PRK12851.1"/>
    <property type="match status" value="1"/>
</dbReference>
<dbReference type="PANTHER" id="PTHR45633">
    <property type="entry name" value="60 KDA HEAT SHOCK PROTEIN, MITOCHONDRIAL"/>
    <property type="match status" value="1"/>
</dbReference>
<dbReference type="Pfam" id="PF00118">
    <property type="entry name" value="Cpn60_TCP1"/>
    <property type="match status" value="1"/>
</dbReference>
<dbReference type="PRINTS" id="PR00298">
    <property type="entry name" value="CHAPERONIN60"/>
</dbReference>
<dbReference type="SUPFAM" id="SSF52029">
    <property type="entry name" value="GroEL apical domain-like"/>
    <property type="match status" value="1"/>
</dbReference>
<dbReference type="SUPFAM" id="SSF48592">
    <property type="entry name" value="GroEL equatorial domain-like"/>
    <property type="match status" value="1"/>
</dbReference>
<dbReference type="SUPFAM" id="SSF54849">
    <property type="entry name" value="GroEL-intermediate domain like"/>
    <property type="match status" value="1"/>
</dbReference>
<dbReference type="PROSITE" id="PS00296">
    <property type="entry name" value="CHAPERONINS_CPN60"/>
    <property type="match status" value="1"/>
</dbReference>
<proteinExistence type="inferred from homology"/>
<reference key="1">
    <citation type="submission" date="2009-06" db="EMBL/GenBank/DDBJ databases">
        <title>Complete sequence of chromosome of Geopacillus sp. WCH70.</title>
        <authorList>
            <consortium name="US DOE Joint Genome Institute"/>
            <person name="Lucas S."/>
            <person name="Copeland A."/>
            <person name="Lapidus A."/>
            <person name="Glavina del Rio T."/>
            <person name="Dalin E."/>
            <person name="Tice H."/>
            <person name="Bruce D."/>
            <person name="Goodwin L."/>
            <person name="Pitluck S."/>
            <person name="Chertkov O."/>
            <person name="Brettin T."/>
            <person name="Detter J.C."/>
            <person name="Han C."/>
            <person name="Larimer F."/>
            <person name="Land M."/>
            <person name="Hauser L."/>
            <person name="Kyrpides N."/>
            <person name="Mikhailova N."/>
            <person name="Brumm P."/>
            <person name="Mead D.A."/>
            <person name="Richardson P."/>
        </authorList>
    </citation>
    <scope>NUCLEOTIDE SEQUENCE [LARGE SCALE GENOMIC DNA]</scope>
    <source>
        <strain>WCH70</strain>
    </source>
</reference>
<comment type="function">
    <text evidence="1">Together with its co-chaperonin GroES, plays an essential role in assisting protein folding. The GroEL-GroES system forms a nano-cage that allows encapsulation of the non-native substrate proteins and provides a physical environment optimized to promote and accelerate protein folding.</text>
</comment>
<comment type="catalytic activity">
    <reaction evidence="1">
        <text>ATP + H2O + a folded polypeptide = ADP + phosphate + an unfolded polypeptide.</text>
        <dbReference type="EC" id="5.6.1.7"/>
    </reaction>
</comment>
<comment type="subunit">
    <text evidence="1">Forms a cylinder of 14 subunits composed of two heptameric rings stacked back-to-back. Interacts with the co-chaperonin GroES.</text>
</comment>
<comment type="subcellular location">
    <subcellularLocation>
        <location evidence="1">Cytoplasm</location>
    </subcellularLocation>
</comment>
<comment type="similarity">
    <text evidence="1">Belongs to the chaperonin (HSP60) family.</text>
</comment>
<organism>
    <name type="scientific">Geobacillus sp. (strain WCH70)</name>
    <dbReference type="NCBI Taxonomy" id="471223"/>
    <lineage>
        <taxon>Bacteria</taxon>
        <taxon>Bacillati</taxon>
        <taxon>Bacillota</taxon>
        <taxon>Bacilli</taxon>
        <taxon>Bacillales</taxon>
        <taxon>Anoxybacillaceae</taxon>
        <taxon>Geobacillus</taxon>
    </lineage>
</organism>
<keyword id="KW-0067">ATP-binding</keyword>
<keyword id="KW-0143">Chaperone</keyword>
<keyword id="KW-0963">Cytoplasm</keyword>
<keyword id="KW-0413">Isomerase</keyword>
<keyword id="KW-0547">Nucleotide-binding</keyword>
<evidence type="ECO:0000255" key="1">
    <source>
        <dbReference type="HAMAP-Rule" id="MF_00600"/>
    </source>
</evidence>
<protein>
    <recommendedName>
        <fullName evidence="1">Chaperonin GroEL</fullName>
        <ecNumber evidence="1">5.6.1.7</ecNumber>
    </recommendedName>
    <alternativeName>
        <fullName evidence="1">60 kDa chaperonin</fullName>
    </alternativeName>
    <alternativeName>
        <fullName evidence="1">Chaperonin-60</fullName>
        <shortName evidence="1">Cpn60</shortName>
    </alternativeName>
</protein>